<feature type="chain" id="PRO_1000067148" description="HPr kinase/phosphorylase">
    <location>
        <begin position="1"/>
        <end position="311"/>
    </location>
</feature>
<feature type="region of interest" description="Important for the catalytic mechanism of both phosphorylation and dephosphorylation" evidence="1">
    <location>
        <begin position="201"/>
        <end position="210"/>
    </location>
</feature>
<feature type="region of interest" description="Important for the catalytic mechanism of dephosphorylation" evidence="1">
    <location>
        <begin position="264"/>
        <end position="269"/>
    </location>
</feature>
<feature type="active site" evidence="1">
    <location>
        <position position="138"/>
    </location>
</feature>
<feature type="active site" evidence="1">
    <location>
        <position position="159"/>
    </location>
</feature>
<feature type="active site" description="Proton acceptor; for phosphorylation activity. Proton donor; for dephosphorylation activity" evidence="1">
    <location>
        <position position="177"/>
    </location>
</feature>
<feature type="active site" evidence="1">
    <location>
        <position position="243"/>
    </location>
</feature>
<feature type="binding site" evidence="1">
    <location>
        <begin position="153"/>
        <end position="160"/>
    </location>
    <ligand>
        <name>ATP</name>
        <dbReference type="ChEBI" id="CHEBI:30616"/>
    </ligand>
</feature>
<feature type="binding site" evidence="1">
    <location>
        <position position="160"/>
    </location>
    <ligand>
        <name>Mg(2+)</name>
        <dbReference type="ChEBI" id="CHEBI:18420"/>
    </ligand>
</feature>
<feature type="binding site" evidence="1">
    <location>
        <position position="202"/>
    </location>
    <ligand>
        <name>Mg(2+)</name>
        <dbReference type="ChEBI" id="CHEBI:18420"/>
    </ligand>
</feature>
<evidence type="ECO:0000255" key="1">
    <source>
        <dbReference type="HAMAP-Rule" id="MF_01249"/>
    </source>
</evidence>
<sequence length="311" mass="34632">MPKVRTKDIIEQFQLELVSGAEGIYRPITTSDLSRPGIEMAGYFAYYPAERLQLLGRTELSFYETLTPEEKKSRMERLCTDITPGIIVSRGLEVPPELIEASERQSVPVMRSTMKTTRLSSRLTNYLESKLAPTTAVHGVLVDVYGVGVLITGKSGVGKSETALELVKRGHRLVADDCVEIRQEDEDTLVGSAPELIEHLLEIRGLGIINMMTLFGAGAVRTHKRISLVVDLELWDPEKQYDRLGLEEEKVKILDTELPKLTIPVRPGRNLAVIVEVAAMNFRLKRLGVNAAEEFSARLSDAIEDGAHDYD</sequence>
<name>HPRK_GEOKA</name>
<protein>
    <recommendedName>
        <fullName evidence="1">HPr kinase/phosphorylase</fullName>
        <shortName evidence="1">HPrK/P</shortName>
        <ecNumber evidence="1">2.7.11.-</ecNumber>
        <ecNumber evidence="1">2.7.4.-</ecNumber>
    </recommendedName>
    <alternativeName>
        <fullName evidence="1">HPr(Ser) kinase/phosphorylase</fullName>
    </alternativeName>
</protein>
<gene>
    <name evidence="1" type="primary">hprK</name>
    <name type="ordered locus">GK3082</name>
</gene>
<proteinExistence type="inferred from homology"/>
<dbReference type="EC" id="2.7.11.-" evidence="1"/>
<dbReference type="EC" id="2.7.4.-" evidence="1"/>
<dbReference type="EMBL" id="BA000043">
    <property type="protein sequence ID" value="BAD77367.1"/>
    <property type="molecule type" value="Genomic_DNA"/>
</dbReference>
<dbReference type="RefSeq" id="WP_011232552.1">
    <property type="nucleotide sequence ID" value="NC_006510.1"/>
</dbReference>
<dbReference type="SMR" id="Q5KVB9"/>
<dbReference type="STRING" id="235909.GK3082"/>
<dbReference type="GeneID" id="32064955"/>
<dbReference type="KEGG" id="gka:GK3082"/>
<dbReference type="eggNOG" id="COG1493">
    <property type="taxonomic scope" value="Bacteria"/>
</dbReference>
<dbReference type="HOGENOM" id="CLU_052030_0_1_9"/>
<dbReference type="Proteomes" id="UP000001172">
    <property type="component" value="Chromosome"/>
</dbReference>
<dbReference type="GO" id="GO:0005524">
    <property type="term" value="F:ATP binding"/>
    <property type="evidence" value="ECO:0007669"/>
    <property type="project" value="UniProtKB-UniRule"/>
</dbReference>
<dbReference type="GO" id="GO:0000287">
    <property type="term" value="F:magnesium ion binding"/>
    <property type="evidence" value="ECO:0007669"/>
    <property type="project" value="UniProtKB-UniRule"/>
</dbReference>
<dbReference type="GO" id="GO:0000155">
    <property type="term" value="F:phosphorelay sensor kinase activity"/>
    <property type="evidence" value="ECO:0007669"/>
    <property type="project" value="InterPro"/>
</dbReference>
<dbReference type="GO" id="GO:0004674">
    <property type="term" value="F:protein serine/threonine kinase activity"/>
    <property type="evidence" value="ECO:0007669"/>
    <property type="project" value="UniProtKB-KW"/>
</dbReference>
<dbReference type="GO" id="GO:0004712">
    <property type="term" value="F:protein serine/threonine/tyrosine kinase activity"/>
    <property type="evidence" value="ECO:0007669"/>
    <property type="project" value="UniProtKB-UniRule"/>
</dbReference>
<dbReference type="GO" id="GO:0006109">
    <property type="term" value="P:regulation of carbohydrate metabolic process"/>
    <property type="evidence" value="ECO:0007669"/>
    <property type="project" value="UniProtKB-UniRule"/>
</dbReference>
<dbReference type="CDD" id="cd01918">
    <property type="entry name" value="HprK_C"/>
    <property type="match status" value="1"/>
</dbReference>
<dbReference type="FunFam" id="3.40.1390.20:FF:000002">
    <property type="entry name" value="HPr kinase/phosphorylase"/>
    <property type="match status" value="1"/>
</dbReference>
<dbReference type="FunFam" id="3.40.50.300:FF:000174">
    <property type="entry name" value="HPr kinase/phosphorylase"/>
    <property type="match status" value="1"/>
</dbReference>
<dbReference type="Gene3D" id="3.40.1390.20">
    <property type="entry name" value="HprK N-terminal domain-like"/>
    <property type="match status" value="1"/>
</dbReference>
<dbReference type="Gene3D" id="3.40.50.300">
    <property type="entry name" value="P-loop containing nucleotide triphosphate hydrolases"/>
    <property type="match status" value="1"/>
</dbReference>
<dbReference type="HAMAP" id="MF_01249">
    <property type="entry name" value="HPr_kinase"/>
    <property type="match status" value="1"/>
</dbReference>
<dbReference type="InterPro" id="IPR003755">
    <property type="entry name" value="HPr(Ser)_kin/Pase"/>
</dbReference>
<dbReference type="InterPro" id="IPR011104">
    <property type="entry name" value="Hpr_kin/Pase_C"/>
</dbReference>
<dbReference type="InterPro" id="IPR011126">
    <property type="entry name" value="Hpr_kin/Pase_Hpr_N"/>
</dbReference>
<dbReference type="InterPro" id="IPR027417">
    <property type="entry name" value="P-loop_NTPase"/>
</dbReference>
<dbReference type="InterPro" id="IPR028979">
    <property type="entry name" value="Ser_kin/Pase_Hpr-like_N_sf"/>
</dbReference>
<dbReference type="NCBIfam" id="TIGR00679">
    <property type="entry name" value="hpr-ser"/>
    <property type="match status" value="1"/>
</dbReference>
<dbReference type="PANTHER" id="PTHR30305:SF1">
    <property type="entry name" value="HPR KINASE_PHOSPHORYLASE"/>
    <property type="match status" value="1"/>
</dbReference>
<dbReference type="PANTHER" id="PTHR30305">
    <property type="entry name" value="PROTEIN YJDM-RELATED"/>
    <property type="match status" value="1"/>
</dbReference>
<dbReference type="Pfam" id="PF07475">
    <property type="entry name" value="Hpr_kinase_C"/>
    <property type="match status" value="1"/>
</dbReference>
<dbReference type="Pfam" id="PF02603">
    <property type="entry name" value="Hpr_kinase_N"/>
    <property type="match status" value="1"/>
</dbReference>
<dbReference type="SUPFAM" id="SSF75138">
    <property type="entry name" value="HprK N-terminal domain-like"/>
    <property type="match status" value="1"/>
</dbReference>
<dbReference type="SUPFAM" id="SSF53795">
    <property type="entry name" value="PEP carboxykinase-like"/>
    <property type="match status" value="1"/>
</dbReference>
<organism>
    <name type="scientific">Geobacillus kaustophilus (strain HTA426)</name>
    <dbReference type="NCBI Taxonomy" id="235909"/>
    <lineage>
        <taxon>Bacteria</taxon>
        <taxon>Bacillati</taxon>
        <taxon>Bacillota</taxon>
        <taxon>Bacilli</taxon>
        <taxon>Bacillales</taxon>
        <taxon>Anoxybacillaceae</taxon>
        <taxon>Geobacillus</taxon>
        <taxon>Geobacillus thermoleovorans group</taxon>
    </lineage>
</organism>
<keyword id="KW-0067">ATP-binding</keyword>
<keyword id="KW-0119">Carbohydrate metabolism</keyword>
<keyword id="KW-0418">Kinase</keyword>
<keyword id="KW-0460">Magnesium</keyword>
<keyword id="KW-0479">Metal-binding</keyword>
<keyword id="KW-0511">Multifunctional enzyme</keyword>
<keyword id="KW-0547">Nucleotide-binding</keyword>
<keyword id="KW-1185">Reference proteome</keyword>
<keyword id="KW-0723">Serine/threonine-protein kinase</keyword>
<keyword id="KW-0808">Transferase</keyword>
<accession>Q5KVB9</accession>
<comment type="function">
    <text evidence="1">Catalyzes the ATP- as well as the pyrophosphate-dependent phosphorylation of a specific serine residue in HPr, a phosphocarrier protein of the phosphoenolpyruvate-dependent sugar phosphotransferase system (PTS). HprK/P also catalyzes the pyrophosphate-producing, inorganic phosphate-dependent dephosphorylation (phosphorolysis) of seryl-phosphorylated HPr (P-Ser-HPr). The two antagonistic activities of HprK/P are regulated by several intracellular metabolites, which change their concentration in response to the absence or presence of rapidly metabolisable carbon sources (glucose, fructose, etc.) in the growth medium. Also phosphorylates/dephosphorylates the HPr-like catabolite repression protein crh on a specific serine residue. Therefore, by controlling the phosphorylation state of HPr and crh, HPrK/P is a sensor enzyme that plays a major role in the regulation of carbon metabolism and sugar transport: it mediates carbon catabolite repression (CCR), and regulates PTS-catalyzed carbohydrate uptake and inducer exclusion.</text>
</comment>
<comment type="catalytic activity">
    <reaction evidence="1">
        <text>[HPr protein]-L-serine + ATP = [HPr protein]-O-phospho-L-serine + ADP + H(+)</text>
        <dbReference type="Rhea" id="RHEA:46600"/>
        <dbReference type="Rhea" id="RHEA-COMP:11602"/>
        <dbReference type="Rhea" id="RHEA-COMP:11603"/>
        <dbReference type="ChEBI" id="CHEBI:15378"/>
        <dbReference type="ChEBI" id="CHEBI:29999"/>
        <dbReference type="ChEBI" id="CHEBI:30616"/>
        <dbReference type="ChEBI" id="CHEBI:83421"/>
        <dbReference type="ChEBI" id="CHEBI:456216"/>
    </reaction>
</comment>
<comment type="catalytic activity">
    <reaction evidence="1">
        <text>[HPr protein]-O-phospho-L-serine + phosphate + H(+) = [HPr protein]-L-serine + diphosphate</text>
        <dbReference type="Rhea" id="RHEA:46604"/>
        <dbReference type="Rhea" id="RHEA-COMP:11602"/>
        <dbReference type="Rhea" id="RHEA-COMP:11603"/>
        <dbReference type="ChEBI" id="CHEBI:15378"/>
        <dbReference type="ChEBI" id="CHEBI:29999"/>
        <dbReference type="ChEBI" id="CHEBI:33019"/>
        <dbReference type="ChEBI" id="CHEBI:43474"/>
        <dbReference type="ChEBI" id="CHEBI:83421"/>
    </reaction>
</comment>
<comment type="cofactor">
    <cofactor evidence="1">
        <name>Mg(2+)</name>
        <dbReference type="ChEBI" id="CHEBI:18420"/>
    </cofactor>
</comment>
<comment type="subunit">
    <text evidence="1">Homohexamer.</text>
</comment>
<comment type="domain">
    <text evidence="1">The Walker A ATP-binding motif also binds Pi and PPi.</text>
</comment>
<comment type="miscellaneous">
    <text evidence="1">Both phosphorylation and phosphorolysis are carried out by the same active site and suggest a common mechanism for both reactions.</text>
</comment>
<comment type="similarity">
    <text evidence="1">Belongs to the HPrK/P family.</text>
</comment>
<reference key="1">
    <citation type="journal article" date="2004" name="Nucleic Acids Res.">
        <title>Thermoadaptation trait revealed by the genome sequence of thermophilic Geobacillus kaustophilus.</title>
        <authorList>
            <person name="Takami H."/>
            <person name="Takaki Y."/>
            <person name="Chee G.-J."/>
            <person name="Nishi S."/>
            <person name="Shimamura S."/>
            <person name="Suzuki H."/>
            <person name="Matsui S."/>
            <person name="Uchiyama I."/>
        </authorList>
    </citation>
    <scope>NUCLEOTIDE SEQUENCE [LARGE SCALE GENOMIC DNA]</scope>
    <source>
        <strain>HTA426</strain>
    </source>
</reference>